<comment type="function">
    <text evidence="8 9">Appears to play multiple roles in cell cycle progression, cytokinesis and apoptosis. The p110 isoforms have been suggested to be involved in pre-mRNA splicing, potentially by phosphorylating the splicing protein SFRS7. The p58 isoform may act as a negative regulator of normal cell cycle progression.</text>
</comment>
<comment type="catalytic activity">
    <reaction>
        <text>L-seryl-[protein] + ATP = O-phospho-L-seryl-[protein] + ADP + H(+)</text>
        <dbReference type="Rhea" id="RHEA:17989"/>
        <dbReference type="Rhea" id="RHEA-COMP:9863"/>
        <dbReference type="Rhea" id="RHEA-COMP:11604"/>
        <dbReference type="ChEBI" id="CHEBI:15378"/>
        <dbReference type="ChEBI" id="CHEBI:29999"/>
        <dbReference type="ChEBI" id="CHEBI:30616"/>
        <dbReference type="ChEBI" id="CHEBI:83421"/>
        <dbReference type="ChEBI" id="CHEBI:456216"/>
        <dbReference type="EC" id="2.7.11.22"/>
    </reaction>
</comment>
<comment type="catalytic activity">
    <reaction>
        <text>L-threonyl-[protein] + ATP = O-phospho-L-threonyl-[protein] + ADP + H(+)</text>
        <dbReference type="Rhea" id="RHEA:46608"/>
        <dbReference type="Rhea" id="RHEA-COMP:11060"/>
        <dbReference type="Rhea" id="RHEA-COMP:11605"/>
        <dbReference type="ChEBI" id="CHEBI:15378"/>
        <dbReference type="ChEBI" id="CHEBI:30013"/>
        <dbReference type="ChEBI" id="CHEBI:30616"/>
        <dbReference type="ChEBI" id="CHEBI:61977"/>
        <dbReference type="ChEBI" id="CHEBI:456216"/>
        <dbReference type="EC" id="2.7.11.22"/>
    </reaction>
</comment>
<comment type="cofactor">
    <cofactor>
        <name>Mg(2+)</name>
        <dbReference type="ChEBI" id="CHEBI:18420"/>
    </cofactor>
</comment>
<comment type="activity regulation">
    <text evidence="1">Phosphorylation at Thr-436 or Tyr-437 inactivates the enzyme, while phosphorylation at Thr-583 activates it.</text>
</comment>
<comment type="subunit">
    <text evidence="8 9">The cleaved p110 isoform, p110C, binds to the serine/threonine kinase PAK1. The p58 isoform but not the p110 isoform or p110C interacts with CCND3. The p110 isoforms are found in large molecular weight complexes containing CCNL1 and SFRS7.</text>
</comment>
<comment type="interaction">
    <interactant intactId="EBI-373024">
        <id>Q9UQ88</id>
    </interactant>
    <interactant intactId="EBI-352572">
        <id>P08238</id>
        <label>HSP90AB1</label>
    </interactant>
    <organismsDiffer>false</organismsDiffer>
    <experiments>3</experiments>
</comment>
<comment type="interaction">
    <interactant intactId="EBI-11579223">
        <id>Q9UQ88-1</id>
    </interactant>
    <interactant intactId="EBI-1180783">
        <id>O96017</id>
        <label>CHEK2</label>
    </interactant>
    <organismsDiffer>false</organismsDiffer>
    <experiments>2</experiments>
</comment>
<comment type="subcellular location">
    <subcellularLocation>
        <location>Cytoplasm</location>
    </subcellularLocation>
    <subcellularLocation>
        <location>Nucleus</location>
    </subcellularLocation>
</comment>
<comment type="alternative products">
    <event type="alternative splicing"/>
    <event type="alternative initiation"/>
    <isoform>
        <id>Q9UQ88-1</id>
        <name>SV6</name>
        <name>p110</name>
        <sequence type="displayed"/>
    </isoform>
    <isoform>
        <id>Q9UQ88-2</id>
        <name>SV1</name>
        <name>Pbeta21</name>
        <name>Beta 2-1</name>
        <sequence type="described" ref="VSP_008286 VSP_008288"/>
    </isoform>
    <isoform>
        <id>Q9UQ88-3</id>
        <name>SV2</name>
        <name>Pbeta22</name>
        <sequence type="described" ref="VSP_008287 VSP_008288"/>
    </isoform>
    <isoform>
        <id>Q9UQ88-4</id>
        <name>SV3</name>
        <sequence type="described" ref="VSP_008288"/>
    </isoform>
    <isoform>
        <id>Q9UQ88-5</id>
        <name>SV7</name>
        <name>SV8</name>
        <sequence type="described" ref="VSP_008283 VSP_008289"/>
    </isoform>
    <isoform>
        <id>Q9UQ88-8</id>
        <name>SV12</name>
        <sequence type="described" ref="VSP_008284 VSP_008292"/>
    </isoform>
    <isoform>
        <id>Q9UQ88-9</id>
        <name>SV13</name>
        <sequence type="described" ref="VSP_008281 VSP_008287 VSP_008288 VSP_008290 VSP_008291"/>
    </isoform>
    <isoform>
        <id>Q9UQ88-10</id>
        <name>4</name>
        <name>Beta 1</name>
        <name>p58</name>
        <sequence type="described" ref="VSP_018836"/>
    </isoform>
    <text>Additional isoforms seem to exist.</text>
</comment>
<comment type="tissue specificity">
    <text evidence="11 12">Expressed ubiquitously. Some evidence of isoform-specific tissue distribution.</text>
</comment>
<comment type="induction">
    <text evidence="7">The p58 isoform is specifically induced in G2/M phase of the cell cycle.</text>
</comment>
<comment type="PTM">
    <text>During apoptosis, induced by Fas or tumor necrosis factor, specific CKD11 p110 isoforms are cleaved by caspases to produce a protein (p110C) that contains the C-terminal kinase domain of the CDK11 proteins.</text>
</comment>
<comment type="miscellaneous">
    <text>Duplicated gene. CDK11A and CDK11B encode almost identical protein kinases of 110 kDa that contain at their C-termini the open reading frame of a smaller 58 kDa isoform which is expressed following IRES-mediated alternative initiation of translation.</text>
</comment>
<comment type="miscellaneous">
    <molecule>Isoform 4</molecule>
    <text evidence="16">Produced by alternative initiation at Met-345 of isoform SV6.</text>
</comment>
<comment type="similarity">
    <text evidence="16">Belongs to the protein kinase superfamily. CMGC Ser/Thr protein kinase family. CDC2/CDKX subfamily.</text>
</comment>
<comment type="caution">
    <text evidence="16">Many references talk about 'p110 isoforms' but it is not yet known if this refers to CDK11A and/or CDK11B or one/some of the isoforms of each.</text>
</comment>
<comment type="sequence caution" evidence="16">
    <conflict type="erroneous gene model prediction">
        <sequence resource="EMBL-CDS" id="AAC95297"/>
    </conflict>
</comment>
<comment type="sequence caution" evidence="16">
    <conflict type="erroneous gene model prediction">
        <sequence resource="EMBL-CDS" id="AAC95298"/>
    </conflict>
</comment>
<comment type="sequence caution" evidence="16">
    <conflict type="erroneous gene model prediction">
        <sequence resource="EMBL-CDS" id="AAC95299"/>
    </conflict>
</comment>
<comment type="sequence caution" evidence="16">
    <conflict type="erroneous gene model prediction">
        <sequence resource="EMBL-CDS" id="AAC95300"/>
    </conflict>
</comment>
<comment type="sequence caution" evidence="16">
    <conflict type="erroneous gene model prediction">
        <sequence resource="EMBL-CDS" id="AAC95302"/>
    </conflict>
</comment>
<comment type="sequence caution" evidence="16">
    <conflict type="erroneous gene model prediction">
        <sequence resource="EMBL-CDS" id="AAC95303"/>
    </conflict>
</comment>
<reference key="1">
    <citation type="journal article" date="1994" name="J. Biol. Chem.">
        <title>Molecular cloning and expression of alternatively spliced PITSLRE protein kinase isoforms.</title>
        <authorList>
            <person name="Xiang J."/>
            <person name="Lahti J.M."/>
            <person name="Grenet J.A."/>
            <person name="Easton J.B."/>
            <person name="Kidd V.J."/>
        </authorList>
    </citation>
    <scope>NUCLEOTIDE SEQUENCE [MRNA] (ISOFORMS SV1; SV2 AND 4)</scope>
    <scope>TISSUE SPECIFICITY</scope>
    <scope>SUBCELLULAR LOCATION</scope>
    <scope>VARIANT SER-402</scope>
    <source>
        <tissue>Cervix carcinoma</tissue>
    </source>
</reference>
<reference key="2">
    <citation type="journal article" date="1998" name="Genome Res.">
        <title>Duplication of a genomic region containing the Cdc2L1-2 and MMP21-22 genes on human chromosome 1p36.3 and their linkage to D1Z2.</title>
        <authorList>
            <person name="Gururajan R."/>
            <person name="Lahti J.M."/>
            <person name="Grenet J.A."/>
            <person name="Easton J."/>
            <person name="Gruber I."/>
            <person name="Ambros P.F."/>
            <person name="Kidd V.J."/>
        </authorList>
    </citation>
    <scope>NUCLEOTIDE SEQUENCE [MRNA] (ISOFORMS SV1; SV2; SV3; SV6; SV7; SV12 AND SV13)</scope>
    <scope>TISSUE SPECIFICITY</scope>
    <scope>VARIANT TRP-93</scope>
    <source>
        <tissue>Cervix carcinoma</tissue>
    </source>
</reference>
<reference key="3">
    <citation type="journal article" date="2006" name="Nature">
        <title>The DNA sequence and biological annotation of human chromosome 1.</title>
        <authorList>
            <person name="Gregory S.G."/>
            <person name="Barlow K.F."/>
            <person name="McLay K.E."/>
            <person name="Kaul R."/>
            <person name="Swarbreck D."/>
            <person name="Dunham A."/>
            <person name="Scott C.E."/>
            <person name="Howe K.L."/>
            <person name="Woodfine K."/>
            <person name="Spencer C.C.A."/>
            <person name="Jones M.C."/>
            <person name="Gillson C."/>
            <person name="Searle S."/>
            <person name="Zhou Y."/>
            <person name="Kokocinski F."/>
            <person name="McDonald L."/>
            <person name="Evans R."/>
            <person name="Phillips K."/>
            <person name="Atkinson A."/>
            <person name="Cooper R."/>
            <person name="Jones C."/>
            <person name="Hall R.E."/>
            <person name="Andrews T.D."/>
            <person name="Lloyd C."/>
            <person name="Ainscough R."/>
            <person name="Almeida J.P."/>
            <person name="Ambrose K.D."/>
            <person name="Anderson F."/>
            <person name="Andrew R.W."/>
            <person name="Ashwell R.I.S."/>
            <person name="Aubin K."/>
            <person name="Babbage A.K."/>
            <person name="Bagguley C.L."/>
            <person name="Bailey J."/>
            <person name="Beasley H."/>
            <person name="Bethel G."/>
            <person name="Bird C.P."/>
            <person name="Bray-Allen S."/>
            <person name="Brown J.Y."/>
            <person name="Brown A.J."/>
            <person name="Buckley D."/>
            <person name="Burton J."/>
            <person name="Bye J."/>
            <person name="Carder C."/>
            <person name="Chapman J.C."/>
            <person name="Clark S.Y."/>
            <person name="Clarke G."/>
            <person name="Clee C."/>
            <person name="Cobley V."/>
            <person name="Collier R.E."/>
            <person name="Corby N."/>
            <person name="Coville G.J."/>
            <person name="Davies J."/>
            <person name="Deadman R."/>
            <person name="Dunn M."/>
            <person name="Earthrowl M."/>
            <person name="Ellington A.G."/>
            <person name="Errington H."/>
            <person name="Frankish A."/>
            <person name="Frankland J."/>
            <person name="French L."/>
            <person name="Garner P."/>
            <person name="Garnett J."/>
            <person name="Gay L."/>
            <person name="Ghori M.R.J."/>
            <person name="Gibson R."/>
            <person name="Gilby L.M."/>
            <person name="Gillett W."/>
            <person name="Glithero R.J."/>
            <person name="Grafham D.V."/>
            <person name="Griffiths C."/>
            <person name="Griffiths-Jones S."/>
            <person name="Grocock R."/>
            <person name="Hammond S."/>
            <person name="Harrison E.S.I."/>
            <person name="Hart E."/>
            <person name="Haugen E."/>
            <person name="Heath P.D."/>
            <person name="Holmes S."/>
            <person name="Holt K."/>
            <person name="Howden P.J."/>
            <person name="Hunt A.R."/>
            <person name="Hunt S.E."/>
            <person name="Hunter G."/>
            <person name="Isherwood J."/>
            <person name="James R."/>
            <person name="Johnson C."/>
            <person name="Johnson D."/>
            <person name="Joy A."/>
            <person name="Kay M."/>
            <person name="Kershaw J.K."/>
            <person name="Kibukawa M."/>
            <person name="Kimberley A.M."/>
            <person name="King A."/>
            <person name="Knights A.J."/>
            <person name="Lad H."/>
            <person name="Laird G."/>
            <person name="Lawlor S."/>
            <person name="Leongamornlert D.A."/>
            <person name="Lloyd D.M."/>
            <person name="Loveland J."/>
            <person name="Lovell J."/>
            <person name="Lush M.J."/>
            <person name="Lyne R."/>
            <person name="Martin S."/>
            <person name="Mashreghi-Mohammadi M."/>
            <person name="Matthews L."/>
            <person name="Matthews N.S.W."/>
            <person name="McLaren S."/>
            <person name="Milne S."/>
            <person name="Mistry S."/>
            <person name="Moore M.J.F."/>
            <person name="Nickerson T."/>
            <person name="O'Dell C.N."/>
            <person name="Oliver K."/>
            <person name="Palmeiri A."/>
            <person name="Palmer S.A."/>
            <person name="Parker A."/>
            <person name="Patel D."/>
            <person name="Pearce A.V."/>
            <person name="Peck A.I."/>
            <person name="Pelan S."/>
            <person name="Phelps K."/>
            <person name="Phillimore B.J."/>
            <person name="Plumb R."/>
            <person name="Rajan J."/>
            <person name="Raymond C."/>
            <person name="Rouse G."/>
            <person name="Saenphimmachak C."/>
            <person name="Sehra H.K."/>
            <person name="Sheridan E."/>
            <person name="Shownkeen R."/>
            <person name="Sims S."/>
            <person name="Skuce C.D."/>
            <person name="Smith M."/>
            <person name="Steward C."/>
            <person name="Subramanian S."/>
            <person name="Sycamore N."/>
            <person name="Tracey A."/>
            <person name="Tromans A."/>
            <person name="Van Helmond Z."/>
            <person name="Wall M."/>
            <person name="Wallis J.M."/>
            <person name="White S."/>
            <person name="Whitehead S.L."/>
            <person name="Wilkinson J.E."/>
            <person name="Willey D.L."/>
            <person name="Williams H."/>
            <person name="Wilming L."/>
            <person name="Wray P.W."/>
            <person name="Wu Z."/>
            <person name="Coulson A."/>
            <person name="Vaudin M."/>
            <person name="Sulston J.E."/>
            <person name="Durbin R.M."/>
            <person name="Hubbard T."/>
            <person name="Wooster R."/>
            <person name="Dunham I."/>
            <person name="Carter N.P."/>
            <person name="McVean G."/>
            <person name="Ross M.T."/>
            <person name="Harrow J."/>
            <person name="Olson M.V."/>
            <person name="Beck S."/>
            <person name="Rogers J."/>
            <person name="Bentley D.R."/>
        </authorList>
    </citation>
    <scope>NUCLEOTIDE SEQUENCE [LARGE SCALE GENOMIC DNA]</scope>
    <scope>VARIANT TRP-93</scope>
</reference>
<reference key="4">
    <citation type="journal article" date="2004" name="Genome Res.">
        <title>The status, quality, and expansion of the NIH full-length cDNA project: the Mammalian Gene Collection (MGC).</title>
        <authorList>
            <consortium name="The MGC Project Team"/>
        </authorList>
    </citation>
    <scope>NUCLEOTIDE SEQUENCE [LARGE SCALE MRNA] (ISOFORM SV7)</scope>
    <source>
        <tissue>Skin</tissue>
    </source>
</reference>
<reference key="5">
    <citation type="journal article" date="2003" name="J. Biol. Chem.">
        <title>CDK11 complexes promote pre-mRNA splicing.</title>
        <authorList>
            <person name="Hu D."/>
            <person name="Mayeda A."/>
            <person name="Trembley J.H."/>
            <person name="Lahti J.M."/>
            <person name="Kidd V.J."/>
        </authorList>
    </citation>
    <scope>FUNCTION</scope>
    <scope>SUBCELLULAR LOCATION</scope>
    <scope>INTERACTION WITH CCNL1 AND SFRS7</scope>
</reference>
<reference key="6">
    <citation type="journal article" date="2000" name="Mol. Cell">
        <title>Identification and characterization of a novel cell cycle-regulated internal ribosome entry site.</title>
        <authorList>
            <person name="Cornelis S."/>
            <person name="Bruynooghe Y."/>
            <person name="Denecker G."/>
            <person name="Van Huffel S."/>
            <person name="Tinton S."/>
            <person name="Beyaert R."/>
        </authorList>
    </citation>
    <scope>ALTERNATIVE INITIATION (ISOFORM 4)</scope>
    <scope>INDUCTION</scope>
</reference>
<reference key="7">
    <citation type="journal article" date="2003" name="J. Biol. Chem.">
        <title>The C-terminal kinase domain of the p34cdc2-related PITSLRE protein kinase (p110C) associates with p21-activated kinase 1 and inhibits its activity during anoikis.</title>
        <authorList>
            <person name="Chen S."/>
            <person name="Yin X."/>
            <person name="Zhu X."/>
            <person name="Yan J."/>
            <person name="Ji S."/>
            <person name="Chen C."/>
            <person name="Cai M."/>
            <person name="Zhang S."/>
            <person name="Zong H."/>
            <person name="Hu Y."/>
            <person name="Yuan Z."/>
            <person name="Shen Z."/>
            <person name="Gu J."/>
        </authorList>
    </citation>
    <scope>FUNCTION</scope>
    <scope>INTERACTION WITH PAK1</scope>
</reference>
<feature type="chain" id="PRO_0000024315" description="Cyclin-dependent kinase 11A">
    <location>
        <begin position="1"/>
        <end position="783"/>
    </location>
</feature>
<feature type="domain" description="Protein kinase" evidence="4">
    <location>
        <begin position="427"/>
        <end position="647"/>
    </location>
</feature>
<feature type="region of interest" description="Disordered" evidence="6">
    <location>
        <begin position="18"/>
        <end position="396"/>
    </location>
</feature>
<feature type="region of interest" description="Disordered" evidence="6">
    <location>
        <begin position="721"/>
        <end position="783"/>
    </location>
</feature>
<feature type="compositionally biased region" description="Basic and acidic residues" evidence="6">
    <location>
        <begin position="18"/>
        <end position="58"/>
    </location>
</feature>
<feature type="compositionally biased region" description="Basic residues" evidence="6">
    <location>
        <begin position="95"/>
        <end position="125"/>
    </location>
</feature>
<feature type="compositionally biased region" description="Basic and acidic residues" evidence="6">
    <location>
        <begin position="126"/>
        <end position="215"/>
    </location>
</feature>
<feature type="compositionally biased region" description="Basic and acidic residues" evidence="6">
    <location>
        <begin position="226"/>
        <end position="241"/>
    </location>
</feature>
<feature type="compositionally biased region" description="Basic and acidic residues" evidence="6">
    <location>
        <begin position="252"/>
        <end position="264"/>
    </location>
</feature>
<feature type="compositionally biased region" description="Low complexity" evidence="6">
    <location>
        <begin position="279"/>
        <end position="290"/>
    </location>
</feature>
<feature type="compositionally biased region" description="Acidic residues" evidence="6">
    <location>
        <begin position="291"/>
        <end position="352"/>
    </location>
</feature>
<feature type="compositionally biased region" description="Acidic residues" evidence="6">
    <location>
        <begin position="371"/>
        <end position="380"/>
    </location>
</feature>
<feature type="active site" description="Proton acceptor" evidence="4 5">
    <location>
        <position position="550"/>
    </location>
</feature>
<feature type="binding site" evidence="4">
    <location>
        <begin position="432"/>
        <end position="440"/>
    </location>
    <ligand>
        <name>ATP</name>
        <dbReference type="ChEBI" id="CHEBI:30616"/>
    </ligand>
</feature>
<feature type="binding site" evidence="4">
    <location>
        <position position="455"/>
    </location>
    <ligand>
        <name>ATP</name>
        <dbReference type="ChEBI" id="CHEBI:30616"/>
    </ligand>
</feature>
<feature type="modified residue" description="Phosphoserine" evidence="3">
    <location>
        <position position="47"/>
    </location>
</feature>
<feature type="modified residue" description="Phosphoserine" evidence="3">
    <location>
        <position position="72"/>
    </location>
</feature>
<feature type="modified residue" description="Phosphoserine" evidence="3">
    <location>
        <position position="271"/>
    </location>
</feature>
<feature type="modified residue" description="Phosphoserine; by CDK7" evidence="2">
    <location>
        <position position="470"/>
    </location>
</feature>
<feature type="modified residue" description="Phosphothreonine; by CDK7" evidence="2">
    <location>
        <position position="476"/>
    </location>
</feature>
<feature type="modified residue" description="Phosphoserine" evidence="2">
    <location>
        <position position="577"/>
    </location>
</feature>
<feature type="modified residue" description="Phosphotyrosine" evidence="2">
    <location>
        <position position="582"/>
    </location>
</feature>
<feature type="modified residue" description="Phosphothreonine" evidence="2">
    <location>
        <position position="583"/>
    </location>
</feature>
<feature type="modified residue" description="Phosphothreonine" evidence="3">
    <location>
        <position position="739"/>
    </location>
</feature>
<feature type="modified residue" description="Phosphoserine" evidence="3">
    <location>
        <position position="740"/>
    </location>
</feature>
<feature type="splice variant" id="VSP_008284" description="In isoform SV12." evidence="15">
    <location>
        <begin position="1"/>
        <end position="616"/>
    </location>
</feature>
<feature type="splice variant" id="VSP_008283" description="In isoform SV7." evidence="13 15">
    <location>
        <begin position="1"/>
        <end position="386"/>
    </location>
</feature>
<feature type="splice variant" id="VSP_018836" description="In isoform 4." evidence="14">
    <location>
        <begin position="1"/>
        <end position="344"/>
    </location>
</feature>
<feature type="splice variant" id="VSP_008281" description="In isoform SV13." evidence="15">
    <location>
        <begin position="1"/>
        <end position="57"/>
    </location>
</feature>
<feature type="splice variant" id="VSP_008286" description="In isoform SV1." evidence="14 15">
    <original>W</original>
    <variation>CRHHSHSAEGG</variation>
    <location>
        <position position="109"/>
    </location>
</feature>
<feature type="splice variant" id="VSP_008287" description="In isoform SV2 and isoform SV13." evidence="14 15">
    <original>R</original>
    <variation>RGNDGFCLFR</variation>
    <location>
        <position position="153"/>
    </location>
</feature>
<feature type="splice variant" id="VSP_008288" description="In isoform SV1, isoform SV2, isoform SV3 and isoform SV13." evidence="14 15">
    <original>GEARPAPAQKPAQL</original>
    <variation>V</variation>
    <location>
        <begin position="240"/>
        <end position="253"/>
    </location>
</feature>
<feature type="splice variant" id="VSP_008289" description="In isoform SV7." evidence="13 15">
    <original>SALTEGDYVPDSPALLPIELKQELPKYLPALQ</original>
    <variation>MKNEKMKTTSWLFQSHGSTEIPGRVKKQRKKW</variation>
    <location>
        <begin position="387"/>
        <end position="418"/>
    </location>
</feature>
<feature type="splice variant" id="VSP_008290" description="In isoform SV13." evidence="15">
    <original>GDFGLAREYGSPLKAYTPVVVTQWYRAPELLLGA</original>
    <variation>SPPPSGPSQGDPPGPTHSRPSVVAGG</variation>
    <location>
        <begin position="567"/>
        <end position="600"/>
    </location>
</feature>
<feature type="splice variant" id="VSP_008291" description="In isoform SV13." evidence="15">
    <location>
        <begin position="601"/>
        <end position="783"/>
    </location>
</feature>
<feature type="splice variant" id="VSP_008292" description="In isoform SV12." evidence="15">
    <original>GELLTQKPLFPGNSEIDQINKVFKELGTPSEKIWPGYSELPV</original>
    <variation>MGKTEEKGNGKGAFQERKGPLGAVRKEAGAGAQDAGAAEGAA</variation>
    <location>
        <begin position="617"/>
        <end position="658"/>
    </location>
</feature>
<feature type="sequence variant" id="VAR_060152" description="In dbSNP:rs1059832.">
    <original>C</original>
    <variation>R</variation>
    <location>
        <position position="57"/>
    </location>
</feature>
<feature type="sequence variant" id="VAR_062200" description="In dbSNP:rs7531938.">
    <original>S</original>
    <variation>P</variation>
    <location>
        <position position="92"/>
    </location>
</feature>
<feature type="sequence variant" id="VAR_031716" description="In dbSNP:rs1059831." evidence="10 12">
    <original>R</original>
    <variation>W</variation>
    <location>
        <position position="93"/>
    </location>
</feature>
<feature type="sequence variant" id="VAR_031717" description="In dbSNP:rs1059828." evidence="11">
    <original>L</original>
    <variation>S</variation>
    <location>
        <position position="402"/>
    </location>
</feature>
<feature type="sequence variant" id="VAR_060153" description="In dbSNP:rs866149312.">
    <original>V</original>
    <variation>A</variation>
    <location>
        <position position="658"/>
    </location>
</feature>
<feature type="sequence conflict" description="In Ref. 1; AAA19594/AAA19595." evidence="16" ref="1">
    <location>
        <position position="109"/>
    </location>
</feature>
<feature type="sequence conflict" description="In Ref. 2; AAC72087." evidence="16" ref="2">
    <original>P</original>
    <variation>R</variation>
    <location>
        <position position="246"/>
    </location>
</feature>
<feature type="sequence conflict" description="In Ref. 1; AAA19594/AAA19595 and 2; AAC72084/AAC72085/AAC72086/AAC72087/AAC72090." evidence="16" ref="1 2">
    <location>
        <begin position="312"/>
        <end position="314"/>
    </location>
</feature>
<feature type="sequence conflict" description="In Ref. 1; AAA19585/AAA19594/AAA19595." evidence="16" ref="1">
    <original>E</original>
    <variation>D</variation>
    <location>
        <position position="424"/>
    </location>
</feature>
<feature type="sequence conflict" description="In Ref. 1; AAA19585/AAA19594/AAA19595." evidence="16" ref="1">
    <original>K</original>
    <variation>N</variation>
    <location>
        <position position="463"/>
    </location>
</feature>
<feature type="sequence conflict" description="In Ref. 1; AAA19585/AAA19594/AAA19595." evidence="16" ref="1">
    <original>E</original>
    <variation>R</variation>
    <location>
        <position position="666"/>
    </location>
</feature>
<feature type="sequence conflict" description="In Ref. 1; AAA19585/AAA19594/AAA19595." evidence="16" ref="1">
    <original>D</original>
    <variation>E</variation>
    <location>
        <position position="682"/>
    </location>
</feature>
<feature type="sequence conflict" description="In Ref. 1; AAA19594." evidence="16" ref="1">
    <original>C</original>
    <variation>R</variation>
    <location sequence="Q9UQ88-2">
        <position position="109"/>
    </location>
</feature>
<feature type="sequence conflict" description="In Ref. 1; AAA19594." evidence="16" ref="1">
    <original>H</original>
    <variation>R</variation>
    <location sequence="Q9UQ88-2">
        <position position="112"/>
    </location>
</feature>
<feature type="sequence conflict" description="In Ref. 1; AAA19595." evidence="16" ref="1">
    <original>F</original>
    <variation>V</variation>
    <location sequence="Q9UQ88-3">
        <position position="158"/>
    </location>
</feature>
<dbReference type="EC" id="2.7.11.22"/>
<dbReference type="EMBL" id="U04819">
    <property type="protein sequence ID" value="AAA19585.1"/>
    <property type="molecule type" value="mRNA"/>
</dbReference>
<dbReference type="EMBL" id="U07704">
    <property type="protein sequence ID" value="AAA19594.1"/>
    <property type="molecule type" value="mRNA"/>
</dbReference>
<dbReference type="EMBL" id="U07705">
    <property type="protein sequence ID" value="AAA19595.1"/>
    <property type="molecule type" value="mRNA"/>
</dbReference>
<dbReference type="EMBL" id="AF067518">
    <property type="protein sequence ID" value="AAC72083.1"/>
    <property type="molecule type" value="mRNA"/>
</dbReference>
<dbReference type="EMBL" id="AF067519">
    <property type="protein sequence ID" value="AAC72084.1"/>
    <property type="molecule type" value="mRNA"/>
</dbReference>
<dbReference type="EMBL" id="AF067520">
    <property type="protein sequence ID" value="AAC72085.1"/>
    <property type="molecule type" value="mRNA"/>
</dbReference>
<dbReference type="EMBL" id="AF067521">
    <property type="protein sequence ID" value="AAC72086.1"/>
    <property type="molecule type" value="mRNA"/>
</dbReference>
<dbReference type="EMBL" id="AF067522">
    <property type="protein sequence ID" value="AAC72087.1"/>
    <property type="molecule type" value="mRNA"/>
</dbReference>
<dbReference type="EMBL" id="AF067523">
    <property type="protein sequence ID" value="AAC72088.1"/>
    <property type="molecule type" value="mRNA"/>
</dbReference>
<dbReference type="EMBL" id="AF067524">
    <property type="protein sequence ID" value="AAC72089.1"/>
    <property type="molecule type" value="mRNA"/>
</dbReference>
<dbReference type="EMBL" id="AF067525">
    <property type="protein sequence ID" value="AAC72090.1"/>
    <property type="molecule type" value="mRNA"/>
</dbReference>
<dbReference type="EMBL" id="AF067526">
    <property type="protein sequence ID" value="AAC72091.1"/>
    <property type="molecule type" value="mRNA"/>
</dbReference>
<dbReference type="EMBL" id="AF067527">
    <property type="protein sequence ID" value="AAC72092.1"/>
    <property type="molecule type" value="mRNA"/>
</dbReference>
<dbReference type="EMBL" id="AF067528">
    <property type="protein sequence ID" value="AAC72093.1"/>
    <property type="molecule type" value="mRNA"/>
</dbReference>
<dbReference type="EMBL" id="AF067529">
    <property type="protein sequence ID" value="AAC72094.1"/>
    <property type="molecule type" value="mRNA"/>
</dbReference>
<dbReference type="EMBL" id="AF080694">
    <property type="protein sequence ID" value="AAC95297.1"/>
    <property type="status" value="ALT_SEQ"/>
    <property type="molecule type" value="Genomic_DNA"/>
</dbReference>
<dbReference type="EMBL" id="AF080695">
    <property type="protein sequence ID" value="AAC95297.1"/>
    <property type="status" value="JOINED"/>
    <property type="molecule type" value="Genomic_DNA"/>
</dbReference>
<dbReference type="EMBL" id="AF105714">
    <property type="protein sequence ID" value="AAC95297.1"/>
    <property type="status" value="JOINED"/>
    <property type="molecule type" value="Genomic_DNA"/>
</dbReference>
<dbReference type="EMBL" id="AF080696">
    <property type="protein sequence ID" value="AAC95297.1"/>
    <property type="status" value="JOINED"/>
    <property type="molecule type" value="Genomic_DNA"/>
</dbReference>
<dbReference type="EMBL" id="AF080697">
    <property type="protein sequence ID" value="AAC95297.1"/>
    <property type="status" value="JOINED"/>
    <property type="molecule type" value="Genomic_DNA"/>
</dbReference>
<dbReference type="EMBL" id="AF092427">
    <property type="protein sequence ID" value="AAC95297.1"/>
    <property type="status" value="JOINED"/>
    <property type="molecule type" value="Genomic_DNA"/>
</dbReference>
<dbReference type="EMBL" id="AF092428">
    <property type="protein sequence ID" value="AAC95297.1"/>
    <property type="status" value="JOINED"/>
    <property type="molecule type" value="Genomic_DNA"/>
</dbReference>
<dbReference type="EMBL" id="AF080689">
    <property type="protein sequence ID" value="AAC95297.1"/>
    <property type="status" value="JOINED"/>
    <property type="molecule type" value="Genomic_DNA"/>
</dbReference>
<dbReference type="EMBL" id="AF080690">
    <property type="protein sequence ID" value="AAC95297.1"/>
    <property type="status" value="JOINED"/>
    <property type="molecule type" value="Genomic_DNA"/>
</dbReference>
<dbReference type="EMBL" id="AF080691">
    <property type="protein sequence ID" value="AAC95297.1"/>
    <property type="status" value="JOINED"/>
    <property type="molecule type" value="Genomic_DNA"/>
</dbReference>
<dbReference type="EMBL" id="AF080692">
    <property type="protein sequence ID" value="AAC95297.1"/>
    <property type="status" value="JOINED"/>
    <property type="molecule type" value="Genomic_DNA"/>
</dbReference>
<dbReference type="EMBL" id="AF080693">
    <property type="protein sequence ID" value="AAC95297.1"/>
    <property type="status" value="JOINED"/>
    <property type="molecule type" value="Genomic_DNA"/>
</dbReference>
<dbReference type="EMBL" id="AF080694">
    <property type="protein sequence ID" value="AAC95298.1"/>
    <property type="status" value="ALT_SEQ"/>
    <property type="molecule type" value="Genomic_DNA"/>
</dbReference>
<dbReference type="EMBL" id="AF080695">
    <property type="protein sequence ID" value="AAC95298.1"/>
    <property type="status" value="JOINED"/>
    <property type="molecule type" value="Genomic_DNA"/>
</dbReference>
<dbReference type="EMBL" id="AF105714">
    <property type="protein sequence ID" value="AAC95298.1"/>
    <property type="status" value="JOINED"/>
    <property type="molecule type" value="Genomic_DNA"/>
</dbReference>
<dbReference type="EMBL" id="AF080696">
    <property type="protein sequence ID" value="AAC95298.1"/>
    <property type="status" value="JOINED"/>
    <property type="molecule type" value="Genomic_DNA"/>
</dbReference>
<dbReference type="EMBL" id="AF080697">
    <property type="protein sequence ID" value="AAC95298.1"/>
    <property type="status" value="JOINED"/>
    <property type="molecule type" value="Genomic_DNA"/>
</dbReference>
<dbReference type="EMBL" id="AF092427">
    <property type="protein sequence ID" value="AAC95298.1"/>
    <property type="status" value="JOINED"/>
    <property type="molecule type" value="Genomic_DNA"/>
</dbReference>
<dbReference type="EMBL" id="AF092428">
    <property type="protein sequence ID" value="AAC95298.1"/>
    <property type="status" value="JOINED"/>
    <property type="molecule type" value="Genomic_DNA"/>
</dbReference>
<dbReference type="EMBL" id="AF080689">
    <property type="protein sequence ID" value="AAC95298.1"/>
    <property type="status" value="JOINED"/>
    <property type="molecule type" value="Genomic_DNA"/>
</dbReference>
<dbReference type="EMBL" id="AF080690">
    <property type="protein sequence ID" value="AAC95298.1"/>
    <property type="status" value="JOINED"/>
    <property type="molecule type" value="Genomic_DNA"/>
</dbReference>
<dbReference type="EMBL" id="AF080691">
    <property type="protein sequence ID" value="AAC95298.1"/>
    <property type="status" value="JOINED"/>
    <property type="molecule type" value="Genomic_DNA"/>
</dbReference>
<dbReference type="EMBL" id="AF080692">
    <property type="protein sequence ID" value="AAC95298.1"/>
    <property type="status" value="JOINED"/>
    <property type="molecule type" value="Genomic_DNA"/>
</dbReference>
<dbReference type="EMBL" id="AF080693">
    <property type="protein sequence ID" value="AAC95298.1"/>
    <property type="status" value="JOINED"/>
    <property type="molecule type" value="Genomic_DNA"/>
</dbReference>
<dbReference type="EMBL" id="AF080694">
    <property type="protein sequence ID" value="AAC95299.1"/>
    <property type="status" value="ALT_SEQ"/>
    <property type="molecule type" value="Genomic_DNA"/>
</dbReference>
<dbReference type="EMBL" id="AF080695">
    <property type="protein sequence ID" value="AAC95299.1"/>
    <property type="status" value="JOINED"/>
    <property type="molecule type" value="Genomic_DNA"/>
</dbReference>
<dbReference type="EMBL" id="AF105714">
    <property type="protein sequence ID" value="AAC95299.1"/>
    <property type="status" value="JOINED"/>
    <property type="molecule type" value="Genomic_DNA"/>
</dbReference>
<dbReference type="EMBL" id="AF080696">
    <property type="protein sequence ID" value="AAC95299.1"/>
    <property type="status" value="JOINED"/>
    <property type="molecule type" value="Genomic_DNA"/>
</dbReference>
<dbReference type="EMBL" id="AF080697">
    <property type="protein sequence ID" value="AAC95299.1"/>
    <property type="status" value="JOINED"/>
    <property type="molecule type" value="Genomic_DNA"/>
</dbReference>
<dbReference type="EMBL" id="AF092427">
    <property type="protein sequence ID" value="AAC95299.1"/>
    <property type="status" value="JOINED"/>
    <property type="molecule type" value="Genomic_DNA"/>
</dbReference>
<dbReference type="EMBL" id="AF092428">
    <property type="protein sequence ID" value="AAC95299.1"/>
    <property type="status" value="JOINED"/>
    <property type="molecule type" value="Genomic_DNA"/>
</dbReference>
<dbReference type="EMBL" id="AF080689">
    <property type="protein sequence ID" value="AAC95299.1"/>
    <property type="status" value="JOINED"/>
    <property type="molecule type" value="Genomic_DNA"/>
</dbReference>
<dbReference type="EMBL" id="AF080690">
    <property type="protein sequence ID" value="AAC95299.1"/>
    <property type="status" value="JOINED"/>
    <property type="molecule type" value="Genomic_DNA"/>
</dbReference>
<dbReference type="EMBL" id="AF080691">
    <property type="protein sequence ID" value="AAC95299.1"/>
    <property type="status" value="JOINED"/>
    <property type="molecule type" value="Genomic_DNA"/>
</dbReference>
<dbReference type="EMBL" id="AF080692">
    <property type="protein sequence ID" value="AAC95299.1"/>
    <property type="status" value="JOINED"/>
    <property type="molecule type" value="Genomic_DNA"/>
</dbReference>
<dbReference type="EMBL" id="AF080693">
    <property type="protein sequence ID" value="AAC95299.1"/>
    <property type="status" value="JOINED"/>
    <property type="molecule type" value="Genomic_DNA"/>
</dbReference>
<dbReference type="EMBL" id="AF080694">
    <property type="protein sequence ID" value="AAC95300.1"/>
    <property type="status" value="ALT_SEQ"/>
    <property type="molecule type" value="Genomic_DNA"/>
</dbReference>
<dbReference type="EMBL" id="AF080695">
    <property type="protein sequence ID" value="AAC95300.1"/>
    <property type="status" value="JOINED"/>
    <property type="molecule type" value="Genomic_DNA"/>
</dbReference>
<dbReference type="EMBL" id="AF105714">
    <property type="protein sequence ID" value="AAC95300.1"/>
    <property type="status" value="JOINED"/>
    <property type="molecule type" value="Genomic_DNA"/>
</dbReference>
<dbReference type="EMBL" id="AF080696">
    <property type="protein sequence ID" value="AAC95300.1"/>
    <property type="status" value="JOINED"/>
    <property type="molecule type" value="Genomic_DNA"/>
</dbReference>
<dbReference type="EMBL" id="AF080697">
    <property type="protein sequence ID" value="AAC95300.1"/>
    <property type="status" value="JOINED"/>
    <property type="molecule type" value="Genomic_DNA"/>
</dbReference>
<dbReference type="EMBL" id="AF092427">
    <property type="protein sequence ID" value="AAC95300.1"/>
    <property type="status" value="JOINED"/>
    <property type="molecule type" value="Genomic_DNA"/>
</dbReference>
<dbReference type="EMBL" id="AF092428">
    <property type="protein sequence ID" value="AAC95300.1"/>
    <property type="status" value="JOINED"/>
    <property type="molecule type" value="Genomic_DNA"/>
</dbReference>
<dbReference type="EMBL" id="AF080689">
    <property type="protein sequence ID" value="AAC95300.1"/>
    <property type="status" value="JOINED"/>
    <property type="molecule type" value="Genomic_DNA"/>
</dbReference>
<dbReference type="EMBL" id="AF080690">
    <property type="protein sequence ID" value="AAC95300.1"/>
    <property type="status" value="JOINED"/>
    <property type="molecule type" value="Genomic_DNA"/>
</dbReference>
<dbReference type="EMBL" id="AF080691">
    <property type="protein sequence ID" value="AAC95300.1"/>
    <property type="status" value="JOINED"/>
    <property type="molecule type" value="Genomic_DNA"/>
</dbReference>
<dbReference type="EMBL" id="AF080692">
    <property type="protein sequence ID" value="AAC95300.1"/>
    <property type="status" value="JOINED"/>
    <property type="molecule type" value="Genomic_DNA"/>
</dbReference>
<dbReference type="EMBL" id="AF080693">
    <property type="protein sequence ID" value="AAC95300.1"/>
    <property type="status" value="JOINED"/>
    <property type="molecule type" value="Genomic_DNA"/>
</dbReference>
<dbReference type="EMBL" id="AF080697">
    <property type="protein sequence ID" value="AAC95302.1"/>
    <property type="status" value="ALT_SEQ"/>
    <property type="molecule type" value="Genomic_DNA"/>
</dbReference>
<dbReference type="EMBL" id="AF080695">
    <property type="protein sequence ID" value="AAC95302.1"/>
    <property type="status" value="JOINED"/>
    <property type="molecule type" value="Genomic_DNA"/>
</dbReference>
<dbReference type="EMBL" id="AF105714">
    <property type="protein sequence ID" value="AAC95302.1"/>
    <property type="status" value="JOINED"/>
    <property type="molecule type" value="Genomic_DNA"/>
</dbReference>
<dbReference type="EMBL" id="AF080696">
    <property type="protein sequence ID" value="AAC95302.1"/>
    <property type="status" value="JOINED"/>
    <property type="molecule type" value="Genomic_DNA"/>
</dbReference>
<dbReference type="EMBL" id="AF080697">
    <property type="protein sequence ID" value="AAC95303.1"/>
    <property type="status" value="ALT_SEQ"/>
    <property type="molecule type" value="Genomic_DNA"/>
</dbReference>
<dbReference type="EMBL" id="AF080695">
    <property type="protein sequence ID" value="AAC95303.1"/>
    <property type="status" value="JOINED"/>
    <property type="molecule type" value="Genomic_DNA"/>
</dbReference>
<dbReference type="EMBL" id="AF105714">
    <property type="protein sequence ID" value="AAC95303.1"/>
    <property type="status" value="JOINED"/>
    <property type="molecule type" value="Genomic_DNA"/>
</dbReference>
<dbReference type="EMBL" id="AF080696">
    <property type="protein sequence ID" value="AAC95303.1"/>
    <property type="status" value="JOINED"/>
    <property type="molecule type" value="Genomic_DNA"/>
</dbReference>
<dbReference type="EMBL" id="AL031282">
    <property type="status" value="NOT_ANNOTATED_CDS"/>
    <property type="molecule type" value="Genomic_DNA"/>
</dbReference>
<dbReference type="EMBL" id="BC110905">
    <property type="protein sequence ID" value="AAI10906.1"/>
    <property type="molecule type" value="mRNA"/>
</dbReference>
<dbReference type="CCDS" id="CCDS44042.1">
    <molecule id="Q9UQ88-2"/>
</dbReference>
<dbReference type="CCDS" id="CCDS44043.1">
    <molecule id="Q9UQ88-4"/>
</dbReference>
<dbReference type="CCDS" id="CCDS81253.1">
    <molecule id="Q9UQ88-1"/>
</dbReference>
<dbReference type="CCDS" id="CCDS81254.1">
    <molecule id="Q9UQ88-3"/>
</dbReference>
<dbReference type="PIR" id="B54024">
    <property type="entry name" value="B54024"/>
</dbReference>
<dbReference type="PIR" id="E54024">
    <property type="entry name" value="E54024"/>
</dbReference>
<dbReference type="PIR" id="F54024">
    <property type="entry name" value="F54024"/>
</dbReference>
<dbReference type="PIR" id="H54024">
    <property type="entry name" value="H54024"/>
</dbReference>
<dbReference type="RefSeq" id="NP_001300825.1">
    <molecule id="Q9UQ88-1"/>
    <property type="nucleotide sequence ID" value="NM_001313896.2"/>
</dbReference>
<dbReference type="RefSeq" id="NP_001300911.1">
    <property type="nucleotide sequence ID" value="NM_001313982.1"/>
</dbReference>
<dbReference type="RefSeq" id="NP_076916.2">
    <molecule id="Q9UQ88-2"/>
    <property type="nucleotide sequence ID" value="NM_024011.4"/>
</dbReference>
<dbReference type="RefSeq" id="NP_277071.2">
    <molecule id="Q9UQ88-4"/>
    <property type="nucleotide sequence ID" value="NM_033529.4"/>
</dbReference>
<dbReference type="SMR" id="Q9UQ88"/>
<dbReference type="BioGRID" id="609064">
    <property type="interactions" value="183"/>
</dbReference>
<dbReference type="ComplexPortal" id="CPX-341">
    <molecule id="Q9UQ88-1"/>
    <property type="entry name" value="Cyclin L1-CDK11A(p110) complex"/>
</dbReference>
<dbReference type="ComplexPortal" id="CPX-343">
    <molecule id="Q9UQ88-1"/>
    <property type="entry name" value="Cyclin L2-CDK11A(p110) complex"/>
</dbReference>
<dbReference type="ComplexPortal" id="CPX-344">
    <molecule id="Q9UQ88-10"/>
    <property type="entry name" value="Cyclin L1-CDK11A(p58) complex"/>
</dbReference>
<dbReference type="ComplexPortal" id="CPX-347">
    <molecule id="Q9UQ88-10"/>
    <property type="entry name" value="Cyclin L2-CDK11A(p58) complex"/>
</dbReference>
<dbReference type="CORUM" id="Q9UQ88"/>
<dbReference type="FunCoup" id="Q9UQ88">
    <property type="interactions" value="2186"/>
</dbReference>
<dbReference type="IntAct" id="Q9UQ88">
    <property type="interactions" value="76"/>
</dbReference>
<dbReference type="MINT" id="Q9UQ88"/>
<dbReference type="STRING" id="9606.ENSP00000367900"/>
<dbReference type="BindingDB" id="Q9UQ88"/>
<dbReference type="ChEMBL" id="CHEMBL5416"/>
<dbReference type="DrugCentral" id="Q9UQ88"/>
<dbReference type="GlyGen" id="Q9UQ88">
    <property type="glycosylation" value="1 site, 1 O-linked glycan (1 site)"/>
</dbReference>
<dbReference type="iPTMnet" id="Q9UQ88"/>
<dbReference type="PhosphoSitePlus" id="Q9UQ88"/>
<dbReference type="BioMuta" id="CDK11A"/>
<dbReference type="DMDM" id="317373559"/>
<dbReference type="CPTAC" id="non-CPTAC-2978"/>
<dbReference type="CPTAC" id="non-CPTAC-5631"/>
<dbReference type="jPOST" id="Q9UQ88"/>
<dbReference type="MassIVE" id="Q9UQ88"/>
<dbReference type="PeptideAtlas" id="Q9UQ88"/>
<dbReference type="ProteomicsDB" id="85520">
    <molecule id="Q9UQ88-1"/>
</dbReference>
<dbReference type="ProteomicsDB" id="85521">
    <molecule id="Q9UQ88-10"/>
</dbReference>
<dbReference type="ProteomicsDB" id="85522">
    <molecule id="Q9UQ88-2"/>
</dbReference>
<dbReference type="ProteomicsDB" id="85523">
    <molecule id="Q9UQ88-3"/>
</dbReference>
<dbReference type="ProteomicsDB" id="85524">
    <molecule id="Q9UQ88-4"/>
</dbReference>
<dbReference type="ProteomicsDB" id="85525">
    <molecule id="Q9UQ88-5"/>
</dbReference>
<dbReference type="ProteomicsDB" id="85526">
    <molecule id="Q9UQ88-8"/>
</dbReference>
<dbReference type="ProteomicsDB" id="85527">
    <molecule id="Q9UQ88-9"/>
</dbReference>
<dbReference type="Pumba" id="Q9UQ88"/>
<dbReference type="Antibodypedia" id="4184">
    <property type="antibodies" value="135 antibodies from 21 providers"/>
</dbReference>
<dbReference type="DNASU" id="728642"/>
<dbReference type="Ensembl" id="ENST00000358779.9">
    <molecule id="Q9UQ88-4"/>
    <property type="protein sequence ID" value="ENSP00000351629.5"/>
    <property type="gene ID" value="ENSG00000008128.23"/>
</dbReference>
<dbReference type="Ensembl" id="ENST00000378633.5">
    <molecule id="Q9UQ88-1"/>
    <property type="protein sequence ID" value="ENSP00000367900.1"/>
    <property type="gene ID" value="ENSG00000008128.23"/>
</dbReference>
<dbReference type="Ensembl" id="ENST00000404249.8">
    <molecule id="Q9UQ88-2"/>
    <property type="protein sequence ID" value="ENSP00000384442.3"/>
    <property type="gene ID" value="ENSG00000008128.23"/>
</dbReference>
<dbReference type="GeneID" id="728642"/>
<dbReference type="KEGG" id="hsa:728642"/>
<dbReference type="MANE-Select" id="ENST00000404249.8">
    <molecule id="Q9UQ88-2"/>
    <property type="protein sequence ID" value="ENSP00000384442.3"/>
    <property type="RefSeq nucleotide sequence ID" value="NM_024011.4"/>
    <property type="RefSeq protein sequence ID" value="NP_076916.2"/>
</dbReference>
<dbReference type="UCSC" id="uc009vkr.4">
    <molecule id="Q9UQ88-1"/>
    <property type="organism name" value="human"/>
</dbReference>
<dbReference type="AGR" id="HGNC:1730"/>
<dbReference type="CTD" id="728642"/>
<dbReference type="DisGeNET" id="728642"/>
<dbReference type="GeneCards" id="CDK11A"/>
<dbReference type="HGNC" id="HGNC:1730">
    <property type="gene designation" value="CDK11A"/>
</dbReference>
<dbReference type="HPA" id="ENSG00000008128">
    <property type="expression patterns" value="Low tissue specificity"/>
</dbReference>
<dbReference type="MalaCards" id="CDK11A"/>
<dbReference type="MIM" id="116951">
    <property type="type" value="gene"/>
</dbReference>
<dbReference type="neXtProt" id="NX_Q9UQ88"/>
<dbReference type="OpenTargets" id="ENSG00000008128"/>
<dbReference type="PharmGKB" id="PA26263"/>
<dbReference type="VEuPathDB" id="HostDB:ENSG00000008128"/>
<dbReference type="GeneTree" id="ENSGT00940000158459"/>
<dbReference type="HOGENOM" id="CLU_000288_91_3_1"/>
<dbReference type="InParanoid" id="Q9UQ88"/>
<dbReference type="OMA" id="DDAACIF"/>
<dbReference type="OrthoDB" id="647at2759"/>
<dbReference type="PAN-GO" id="Q9UQ88">
    <property type="GO annotations" value="4 GO annotations based on evolutionary models"/>
</dbReference>
<dbReference type="PhylomeDB" id="Q9UQ88"/>
<dbReference type="TreeFam" id="TF101035"/>
<dbReference type="PathwayCommons" id="Q9UQ88"/>
<dbReference type="Reactome" id="R-HSA-380270">
    <property type="pathway name" value="Recruitment of mitotic centrosome proteins and complexes"/>
</dbReference>
<dbReference type="SignaLink" id="Q9UQ88"/>
<dbReference type="SIGNOR" id="Q9UQ88"/>
<dbReference type="BioGRID-ORCS" id="728642">
    <property type="hits" value="748 hits in 1189 CRISPR screens"/>
</dbReference>
<dbReference type="ChiTaRS" id="CDK11A">
    <property type="organism name" value="human"/>
</dbReference>
<dbReference type="GeneWiki" id="CDC2L2"/>
<dbReference type="GenomeRNAi" id="728642"/>
<dbReference type="Pharos" id="Q9UQ88">
    <property type="development level" value="Tchem"/>
</dbReference>
<dbReference type="PRO" id="PR:Q9UQ88"/>
<dbReference type="Proteomes" id="UP000005640">
    <property type="component" value="Chromosome 1"/>
</dbReference>
<dbReference type="RNAct" id="Q9UQ88">
    <property type="molecule type" value="protein"/>
</dbReference>
<dbReference type="Bgee" id="ENSG00000008128">
    <property type="expression patterns" value="Expressed in sural nerve and 96 other cell types or tissues"/>
</dbReference>
<dbReference type="ExpressionAtlas" id="Q9UQ88">
    <property type="expression patterns" value="baseline and differential"/>
</dbReference>
<dbReference type="GO" id="GO:0000307">
    <property type="term" value="C:cyclin-dependent protein kinase holoenzyme complex"/>
    <property type="evidence" value="ECO:0000353"/>
    <property type="project" value="ComplexPortal"/>
</dbReference>
<dbReference type="GO" id="GO:0005737">
    <property type="term" value="C:cytoplasm"/>
    <property type="evidence" value="ECO:0007669"/>
    <property type="project" value="UniProtKB-SubCell"/>
</dbReference>
<dbReference type="GO" id="GO:0005634">
    <property type="term" value="C:nucleus"/>
    <property type="evidence" value="ECO:0000314"/>
    <property type="project" value="UniProtKB"/>
</dbReference>
<dbReference type="GO" id="GO:0005524">
    <property type="term" value="F:ATP binding"/>
    <property type="evidence" value="ECO:0000314"/>
    <property type="project" value="UniProtKB"/>
</dbReference>
<dbReference type="GO" id="GO:0004693">
    <property type="term" value="F:cyclin-dependent protein serine/threonine kinase activity"/>
    <property type="evidence" value="ECO:0007669"/>
    <property type="project" value="UniProtKB-EC"/>
</dbReference>
<dbReference type="GO" id="GO:0004672">
    <property type="term" value="F:protein kinase activity"/>
    <property type="evidence" value="ECO:0000303"/>
    <property type="project" value="UniProtKB"/>
</dbReference>
<dbReference type="GO" id="GO:0106310">
    <property type="term" value="F:protein serine kinase activity"/>
    <property type="evidence" value="ECO:0007669"/>
    <property type="project" value="RHEA"/>
</dbReference>
<dbReference type="GO" id="GO:0004674">
    <property type="term" value="F:protein serine/threonine kinase activity"/>
    <property type="evidence" value="ECO:0000314"/>
    <property type="project" value="UniProtKB"/>
</dbReference>
<dbReference type="GO" id="GO:0006915">
    <property type="term" value="P:apoptotic process"/>
    <property type="evidence" value="ECO:0000303"/>
    <property type="project" value="UniProtKB"/>
</dbReference>
<dbReference type="GO" id="GO:0000278">
    <property type="term" value="P:mitotic cell cycle"/>
    <property type="evidence" value="ECO:0000303"/>
    <property type="project" value="UniProtKB"/>
</dbReference>
<dbReference type="GO" id="GO:0006468">
    <property type="term" value="P:protein phosphorylation"/>
    <property type="evidence" value="ECO:0000314"/>
    <property type="project" value="UniProtKB"/>
</dbReference>
<dbReference type="GO" id="GO:0042981">
    <property type="term" value="P:regulation of apoptotic process"/>
    <property type="evidence" value="ECO:0000303"/>
    <property type="project" value="ComplexPortal"/>
</dbReference>
<dbReference type="GO" id="GO:0051726">
    <property type="term" value="P:regulation of cell cycle"/>
    <property type="evidence" value="ECO:0000318"/>
    <property type="project" value="GO_Central"/>
</dbReference>
<dbReference type="GO" id="GO:0001558">
    <property type="term" value="P:regulation of cell growth"/>
    <property type="evidence" value="ECO:0000270"/>
    <property type="project" value="UniProtKB"/>
</dbReference>
<dbReference type="GO" id="GO:0046605">
    <property type="term" value="P:regulation of centrosome cycle"/>
    <property type="evidence" value="ECO:0000303"/>
    <property type="project" value="ComplexPortal"/>
</dbReference>
<dbReference type="GO" id="GO:0006355">
    <property type="term" value="P:regulation of DNA-templated transcription"/>
    <property type="evidence" value="ECO:0000303"/>
    <property type="project" value="UniProtKB"/>
</dbReference>
<dbReference type="GO" id="GO:0050684">
    <property type="term" value="P:regulation of mRNA processing"/>
    <property type="evidence" value="ECO:0000314"/>
    <property type="project" value="UniProtKB"/>
</dbReference>
<dbReference type="GO" id="GO:0043484">
    <property type="term" value="P:regulation of RNA splicing"/>
    <property type="evidence" value="ECO:0000314"/>
    <property type="project" value="ComplexPortal"/>
</dbReference>
<dbReference type="CDD" id="cd07843">
    <property type="entry name" value="STKc_CDC2L1"/>
    <property type="match status" value="1"/>
</dbReference>
<dbReference type="FunFam" id="3.30.200.20:FF:000054">
    <property type="entry name" value="Cyclin-dependent kinase 11B"/>
    <property type="match status" value="1"/>
</dbReference>
<dbReference type="FunFam" id="1.10.510.10:FF:000124">
    <property type="entry name" value="cyclin-dependent kinase 11B isoform X1"/>
    <property type="match status" value="1"/>
</dbReference>
<dbReference type="Gene3D" id="3.30.200.20">
    <property type="entry name" value="Phosphorylase Kinase, domain 1"/>
    <property type="match status" value="1"/>
</dbReference>
<dbReference type="Gene3D" id="1.10.510.10">
    <property type="entry name" value="Transferase(Phosphotransferase) domain 1"/>
    <property type="match status" value="1"/>
</dbReference>
<dbReference type="InterPro" id="IPR050108">
    <property type="entry name" value="CDK"/>
</dbReference>
<dbReference type="InterPro" id="IPR045267">
    <property type="entry name" value="CDK11/PITSLRE_STKc"/>
</dbReference>
<dbReference type="InterPro" id="IPR011009">
    <property type="entry name" value="Kinase-like_dom_sf"/>
</dbReference>
<dbReference type="InterPro" id="IPR000719">
    <property type="entry name" value="Prot_kinase_dom"/>
</dbReference>
<dbReference type="InterPro" id="IPR008271">
    <property type="entry name" value="Ser/Thr_kinase_AS"/>
</dbReference>
<dbReference type="PANTHER" id="PTHR24056">
    <property type="entry name" value="CELL DIVISION PROTEIN KINASE"/>
    <property type="match status" value="1"/>
</dbReference>
<dbReference type="PANTHER" id="PTHR24056:SF107">
    <property type="entry name" value="CYCLIN-DEPENDENT KINASE 11A-RELATED"/>
    <property type="match status" value="1"/>
</dbReference>
<dbReference type="Pfam" id="PF00069">
    <property type="entry name" value="Pkinase"/>
    <property type="match status" value="1"/>
</dbReference>
<dbReference type="SMART" id="SM00220">
    <property type="entry name" value="S_TKc"/>
    <property type="match status" value="1"/>
</dbReference>
<dbReference type="SUPFAM" id="SSF56112">
    <property type="entry name" value="Protein kinase-like (PK-like)"/>
    <property type="match status" value="1"/>
</dbReference>
<dbReference type="PROSITE" id="PS50011">
    <property type="entry name" value="PROTEIN_KINASE_DOM"/>
    <property type="match status" value="1"/>
</dbReference>
<dbReference type="PROSITE" id="PS00108">
    <property type="entry name" value="PROTEIN_KINASE_ST"/>
    <property type="match status" value="1"/>
</dbReference>
<accession>Q9UQ88</accession>
<accession>O95227</accession>
<accession>O95228</accession>
<accession>O96012</accession>
<accession>Q12821</accession>
<accession>Q12853</accession>
<accession>Q12854</accession>
<accession>Q2TAJ0</accession>
<accession>Q5QPR0</accession>
<accession>Q5QPR1</accession>
<accession>Q5QPR2</accession>
<accession>Q9UBC4</accession>
<accession>Q9UBI3</accession>
<accession>Q9UEI1</accession>
<accession>Q9UEI2</accession>
<accession>Q9UP53</accession>
<accession>Q9UP54</accession>
<accession>Q9UP55</accession>
<accession>Q9UP56</accession>
<accession>Q9UQ86</accession>
<accession>Q9UQ87</accession>
<accession>Q9UQ89</accession>
<organism>
    <name type="scientific">Homo sapiens</name>
    <name type="common">Human</name>
    <dbReference type="NCBI Taxonomy" id="9606"/>
    <lineage>
        <taxon>Eukaryota</taxon>
        <taxon>Metazoa</taxon>
        <taxon>Chordata</taxon>
        <taxon>Craniata</taxon>
        <taxon>Vertebrata</taxon>
        <taxon>Euteleostomi</taxon>
        <taxon>Mammalia</taxon>
        <taxon>Eutheria</taxon>
        <taxon>Euarchontoglires</taxon>
        <taxon>Primates</taxon>
        <taxon>Haplorrhini</taxon>
        <taxon>Catarrhini</taxon>
        <taxon>Hominidae</taxon>
        <taxon>Homo</taxon>
    </lineage>
</organism>
<gene>
    <name type="primary">CDK11A</name>
    <name type="synonym">CDC2L2</name>
    <name type="synonym">CDC2L3</name>
    <name type="synonym">PITSLREB</name>
</gene>
<keyword id="KW-0024">Alternative initiation</keyword>
<keyword id="KW-0025">Alternative splicing</keyword>
<keyword id="KW-0053">Apoptosis</keyword>
<keyword id="KW-0067">ATP-binding</keyword>
<keyword id="KW-0131">Cell cycle</keyword>
<keyword id="KW-0963">Cytoplasm</keyword>
<keyword id="KW-0418">Kinase</keyword>
<keyword id="KW-0547">Nucleotide-binding</keyword>
<keyword id="KW-0539">Nucleus</keyword>
<keyword id="KW-0597">Phosphoprotein</keyword>
<keyword id="KW-1267">Proteomics identification</keyword>
<keyword id="KW-1185">Reference proteome</keyword>
<keyword id="KW-0723">Serine/threonine-protein kinase</keyword>
<keyword id="KW-0808">Transferase</keyword>
<name>CD11A_HUMAN</name>
<sequence>MGDEKDSWKVKTLDEILQEKKRRKEQEEKAEIKRLKNSDDRDSKRDSLEEGELRDHCMEITIRNSPYRREDSMEDRGEEDDSLAIKPPQQMSRKEKVHHRKDEKRKEKWKHARVKEREHERRKRHREEQDKARREWERQKRREMAREHSRRERDRLEQLERKRERERKMREQQKEQREQKERERRAEERRKEREARREVSAHHRTMREDYSDKVKASHWSRSPPRPPRERFELGDGRKPGEARPAPAQKPAQLKEEKMEERDLLSDLQDISDSERKTSSAESSSAESGSGSEEEEEEEEEEEEEGSTSEESEEEEEEEEEEEEETGSNSEEASEQSAEEVSEEEMSEDEERENENHLLVVPESRFDRDSGESEEAEEEVGEGTPQSSALTEGDYVPDSPALLPIELKQELPKYLPALQGCRSVEEFQCLNRIEEGTYGVVYRAKDKKTDEIVALKRLKMEKEKEGFPITSLREINTILKAQHPNIVTVREIVVGSNMDKIYIVMNYVEHDLKSLMETMKQPFLPGEVKTLMIQLLRGVKHLHDNWILHRDLKTSNLLLSHAGILKVGDFGLAREYGSPLKAYTPVVVTQWYRAPELLLGAKEYSTAVDMWSVGCIFGELLTQKPLFPGNSEIDQINKVFKELGTPSEKIWPGYSELPVVKKMTFSEHPYNNLRKRFGALLSDQGFDLMNKFLTYFPGRRISAEDGLKHEYFRETPLPIDPSMFPTWPAKSEQQRVKRGTSPRPPEGGLGYSQLGDDDLKETGFHLTTTNQGASAAGPGFSLKF</sequence>
<proteinExistence type="evidence at protein level"/>
<evidence type="ECO:0000250" key="1"/>
<evidence type="ECO:0000250" key="2">
    <source>
        <dbReference type="UniProtKB" id="P21127"/>
    </source>
</evidence>
<evidence type="ECO:0000250" key="3">
    <source>
        <dbReference type="UniProtKB" id="P24788"/>
    </source>
</evidence>
<evidence type="ECO:0000255" key="4">
    <source>
        <dbReference type="PROSITE-ProRule" id="PRU00159"/>
    </source>
</evidence>
<evidence type="ECO:0000255" key="5">
    <source>
        <dbReference type="PROSITE-ProRule" id="PRU10027"/>
    </source>
</evidence>
<evidence type="ECO:0000256" key="6">
    <source>
        <dbReference type="SAM" id="MobiDB-lite"/>
    </source>
</evidence>
<evidence type="ECO:0000269" key="7">
    <source>
    </source>
</evidence>
<evidence type="ECO:0000269" key="8">
    <source>
    </source>
</evidence>
<evidence type="ECO:0000269" key="9">
    <source>
    </source>
</evidence>
<evidence type="ECO:0000269" key="10">
    <source>
    </source>
</evidence>
<evidence type="ECO:0000269" key="11">
    <source>
    </source>
</evidence>
<evidence type="ECO:0000269" key="12">
    <source>
    </source>
</evidence>
<evidence type="ECO:0000303" key="13">
    <source>
    </source>
</evidence>
<evidence type="ECO:0000303" key="14">
    <source>
    </source>
</evidence>
<evidence type="ECO:0000303" key="15">
    <source>
    </source>
</evidence>
<evidence type="ECO:0000305" key="16"/>
<protein>
    <recommendedName>
        <fullName>Cyclin-dependent kinase 11A</fullName>
        <ecNumber>2.7.11.22</ecNumber>
    </recommendedName>
    <alternativeName>
        <fullName>Cell division cycle 2-like protein kinase 2</fullName>
    </alternativeName>
    <alternativeName>
        <fullName>Cell division protein kinase 11A</fullName>
    </alternativeName>
    <alternativeName>
        <fullName>Galactosyltransferase-associated protein kinase p58/GTA</fullName>
    </alternativeName>
    <alternativeName>
        <fullName>PITSLRE serine/threonine-protein kinase CDC2L2</fullName>
    </alternativeName>
</protein>